<feature type="chain" id="PRO_0000148676" description="Argininosuccinate synthase">
    <location>
        <begin position="1"/>
        <end position="395"/>
    </location>
</feature>
<feature type="binding site" evidence="1">
    <location>
        <begin position="8"/>
        <end position="16"/>
    </location>
    <ligand>
        <name>ATP</name>
        <dbReference type="ChEBI" id="CHEBI:30616"/>
    </ligand>
</feature>
<feature type="binding site" evidence="1">
    <location>
        <position position="86"/>
    </location>
    <ligand>
        <name>L-citrulline</name>
        <dbReference type="ChEBI" id="CHEBI:57743"/>
    </ligand>
</feature>
<feature type="binding site" evidence="1">
    <location>
        <position position="116"/>
    </location>
    <ligand>
        <name>ATP</name>
        <dbReference type="ChEBI" id="CHEBI:30616"/>
    </ligand>
</feature>
<feature type="binding site" evidence="1">
    <location>
        <position position="118"/>
    </location>
    <ligand>
        <name>L-aspartate</name>
        <dbReference type="ChEBI" id="CHEBI:29991"/>
    </ligand>
</feature>
<feature type="binding site" evidence="1">
    <location>
        <position position="122"/>
    </location>
    <ligand>
        <name>L-aspartate</name>
        <dbReference type="ChEBI" id="CHEBI:29991"/>
    </ligand>
</feature>
<feature type="binding site" evidence="1">
    <location>
        <position position="122"/>
    </location>
    <ligand>
        <name>L-citrulline</name>
        <dbReference type="ChEBI" id="CHEBI:57743"/>
    </ligand>
</feature>
<feature type="binding site" evidence="1">
    <location>
        <position position="123"/>
    </location>
    <ligand>
        <name>L-aspartate</name>
        <dbReference type="ChEBI" id="CHEBI:29991"/>
    </ligand>
</feature>
<feature type="binding site" evidence="1">
    <location>
        <position position="126"/>
    </location>
    <ligand>
        <name>L-citrulline</name>
        <dbReference type="ChEBI" id="CHEBI:57743"/>
    </ligand>
</feature>
<feature type="binding site" evidence="1">
    <location>
        <position position="173"/>
    </location>
    <ligand>
        <name>L-citrulline</name>
        <dbReference type="ChEBI" id="CHEBI:57743"/>
    </ligand>
</feature>
<feature type="binding site" evidence="1">
    <location>
        <position position="182"/>
    </location>
    <ligand>
        <name>L-citrulline</name>
        <dbReference type="ChEBI" id="CHEBI:57743"/>
    </ligand>
</feature>
<feature type="binding site" evidence="1">
    <location>
        <position position="257"/>
    </location>
    <ligand>
        <name>L-citrulline</name>
        <dbReference type="ChEBI" id="CHEBI:57743"/>
    </ligand>
</feature>
<feature type="binding site" evidence="1">
    <location>
        <position position="269"/>
    </location>
    <ligand>
        <name>L-citrulline</name>
        <dbReference type="ChEBI" id="CHEBI:57743"/>
    </ligand>
</feature>
<reference key="1">
    <citation type="journal article" date="1996" name="Science">
        <title>Complete genome sequence of the methanogenic archaeon, Methanococcus jannaschii.</title>
        <authorList>
            <person name="Bult C.J."/>
            <person name="White O."/>
            <person name="Olsen G.J."/>
            <person name="Zhou L."/>
            <person name="Fleischmann R.D."/>
            <person name="Sutton G.G."/>
            <person name="Blake J.A."/>
            <person name="FitzGerald L.M."/>
            <person name="Clayton R.A."/>
            <person name="Gocayne J.D."/>
            <person name="Kerlavage A.R."/>
            <person name="Dougherty B.A."/>
            <person name="Tomb J.-F."/>
            <person name="Adams M.D."/>
            <person name="Reich C.I."/>
            <person name="Overbeek R."/>
            <person name="Kirkness E.F."/>
            <person name="Weinstock K.G."/>
            <person name="Merrick J.M."/>
            <person name="Glodek A."/>
            <person name="Scott J.L."/>
            <person name="Geoghagen N.S.M."/>
            <person name="Weidman J.F."/>
            <person name="Fuhrmann J.L."/>
            <person name="Nguyen D."/>
            <person name="Utterback T.R."/>
            <person name="Kelley J.M."/>
            <person name="Peterson J.D."/>
            <person name="Sadow P.W."/>
            <person name="Hanna M.C."/>
            <person name="Cotton M.D."/>
            <person name="Roberts K.M."/>
            <person name="Hurst M.A."/>
            <person name="Kaine B.P."/>
            <person name="Borodovsky M."/>
            <person name="Klenk H.-P."/>
            <person name="Fraser C.M."/>
            <person name="Smith H.O."/>
            <person name="Woese C.R."/>
            <person name="Venter J.C."/>
        </authorList>
    </citation>
    <scope>NUCLEOTIDE SEQUENCE [LARGE SCALE GENOMIC DNA]</scope>
    <source>
        <strain>ATCC 43067 / DSM 2661 / JAL-1 / JCM 10045 / NBRC 100440</strain>
    </source>
</reference>
<keyword id="KW-0028">Amino-acid biosynthesis</keyword>
<keyword id="KW-0055">Arginine biosynthesis</keyword>
<keyword id="KW-0067">ATP-binding</keyword>
<keyword id="KW-0963">Cytoplasm</keyword>
<keyword id="KW-0436">Ligase</keyword>
<keyword id="KW-0547">Nucleotide-binding</keyword>
<keyword id="KW-1185">Reference proteome</keyword>
<sequence length="395" mass="44723">MERIAVLAYSGGLDTSCCLKLLEDKYGYKVVSVCVDVGQPEEEIKEVEEKAKKLGVLKHYTIDAKEEFVKDYIFRAIKANAMYEGYPLSTALARPLIAHKVVEIAEEVGAEAVAHGCTGKGNDQFRFETTIRIKAPHLKIIAPIRDLNLTRAEEIEYAKEKGIPIPTESKKYSIDENLWGRSIEGSELENPDFVPPEEIYAWTKNPVEDKEEEIVEIEFKEGVPVAINGEKLEPVELIKKANEIAGKHGVGRIDIIEDRIIGLKSRENYECPGAVLLLTAHKALEQLVLTRDELRFKEIVDSLYGELIYKGLWFDPLREDLDAFIDKTQERVTGTVKVKLFGGTARVVGRDSPYALYSKELVSFDEKEIDQKELAGMVKYHGLQAMLYEMRKKRK</sequence>
<comment type="catalytic activity">
    <reaction evidence="1">
        <text>L-citrulline + L-aspartate + ATP = 2-(N(omega)-L-arginino)succinate + AMP + diphosphate + H(+)</text>
        <dbReference type="Rhea" id="RHEA:10932"/>
        <dbReference type="ChEBI" id="CHEBI:15378"/>
        <dbReference type="ChEBI" id="CHEBI:29991"/>
        <dbReference type="ChEBI" id="CHEBI:30616"/>
        <dbReference type="ChEBI" id="CHEBI:33019"/>
        <dbReference type="ChEBI" id="CHEBI:57472"/>
        <dbReference type="ChEBI" id="CHEBI:57743"/>
        <dbReference type="ChEBI" id="CHEBI:456215"/>
        <dbReference type="EC" id="6.3.4.5"/>
    </reaction>
</comment>
<comment type="pathway">
    <text evidence="1">Amino-acid biosynthesis; L-arginine biosynthesis; L-arginine from L-ornithine and carbamoyl phosphate: step 2/3.</text>
</comment>
<comment type="subunit">
    <text evidence="1">Homotetramer.</text>
</comment>
<comment type="subcellular location">
    <subcellularLocation>
        <location evidence="1">Cytoplasm</location>
    </subcellularLocation>
</comment>
<comment type="similarity">
    <text evidence="1">Belongs to the argininosuccinate synthase family. Type 1 subfamily.</text>
</comment>
<gene>
    <name evidence="1" type="primary">argG</name>
    <name type="ordered locus">MJ0429</name>
</gene>
<name>ASSY_METJA</name>
<dbReference type="EC" id="6.3.4.5" evidence="1"/>
<dbReference type="EMBL" id="L77117">
    <property type="protein sequence ID" value="AAB98414.1"/>
    <property type="molecule type" value="Genomic_DNA"/>
</dbReference>
<dbReference type="PIR" id="E64353">
    <property type="entry name" value="E64353"/>
</dbReference>
<dbReference type="RefSeq" id="WP_010869928.1">
    <property type="nucleotide sequence ID" value="NC_000909.1"/>
</dbReference>
<dbReference type="SMR" id="Q60174"/>
<dbReference type="FunCoup" id="Q60174">
    <property type="interactions" value="224"/>
</dbReference>
<dbReference type="STRING" id="243232.MJ_0429"/>
<dbReference type="PaxDb" id="243232-MJ_0429"/>
<dbReference type="EnsemblBacteria" id="AAB98414">
    <property type="protein sequence ID" value="AAB98414"/>
    <property type="gene ID" value="MJ_0429"/>
</dbReference>
<dbReference type="GeneID" id="1451289"/>
<dbReference type="KEGG" id="mja:MJ_0429"/>
<dbReference type="eggNOG" id="arCOG00112">
    <property type="taxonomic scope" value="Archaea"/>
</dbReference>
<dbReference type="HOGENOM" id="CLU_032784_4_2_2"/>
<dbReference type="InParanoid" id="Q60174"/>
<dbReference type="OrthoDB" id="5877at2157"/>
<dbReference type="PhylomeDB" id="Q60174"/>
<dbReference type="UniPathway" id="UPA00068">
    <property type="reaction ID" value="UER00113"/>
</dbReference>
<dbReference type="Proteomes" id="UP000000805">
    <property type="component" value="Chromosome"/>
</dbReference>
<dbReference type="GO" id="GO:0005737">
    <property type="term" value="C:cytoplasm"/>
    <property type="evidence" value="ECO:0000318"/>
    <property type="project" value="GO_Central"/>
</dbReference>
<dbReference type="GO" id="GO:0004055">
    <property type="term" value="F:argininosuccinate synthase activity"/>
    <property type="evidence" value="ECO:0000318"/>
    <property type="project" value="GO_Central"/>
</dbReference>
<dbReference type="GO" id="GO:0005524">
    <property type="term" value="F:ATP binding"/>
    <property type="evidence" value="ECO:0007669"/>
    <property type="project" value="UniProtKB-UniRule"/>
</dbReference>
<dbReference type="GO" id="GO:0000053">
    <property type="term" value="P:argininosuccinate metabolic process"/>
    <property type="evidence" value="ECO:0000318"/>
    <property type="project" value="GO_Central"/>
</dbReference>
<dbReference type="GO" id="GO:0006526">
    <property type="term" value="P:L-arginine biosynthetic process"/>
    <property type="evidence" value="ECO:0000318"/>
    <property type="project" value="GO_Central"/>
</dbReference>
<dbReference type="GO" id="GO:0000050">
    <property type="term" value="P:urea cycle"/>
    <property type="evidence" value="ECO:0000318"/>
    <property type="project" value="GO_Central"/>
</dbReference>
<dbReference type="CDD" id="cd01999">
    <property type="entry name" value="ASS"/>
    <property type="match status" value="1"/>
</dbReference>
<dbReference type="FunFam" id="3.40.50.620:FF:000019">
    <property type="entry name" value="Argininosuccinate synthase"/>
    <property type="match status" value="1"/>
</dbReference>
<dbReference type="FunFam" id="3.90.1260.10:FF:000007">
    <property type="entry name" value="Argininosuccinate synthase"/>
    <property type="match status" value="1"/>
</dbReference>
<dbReference type="Gene3D" id="3.90.1260.10">
    <property type="entry name" value="Argininosuccinate synthetase, chain A, domain 2"/>
    <property type="match status" value="1"/>
</dbReference>
<dbReference type="Gene3D" id="3.40.50.620">
    <property type="entry name" value="HUPs"/>
    <property type="match status" value="1"/>
</dbReference>
<dbReference type="HAMAP" id="MF_00005">
    <property type="entry name" value="Arg_succ_synth_type1"/>
    <property type="match status" value="1"/>
</dbReference>
<dbReference type="InterPro" id="IPR048268">
    <property type="entry name" value="Arginosuc_syn_C"/>
</dbReference>
<dbReference type="InterPro" id="IPR048267">
    <property type="entry name" value="Arginosuc_syn_N"/>
</dbReference>
<dbReference type="InterPro" id="IPR001518">
    <property type="entry name" value="Arginosuc_synth"/>
</dbReference>
<dbReference type="InterPro" id="IPR018223">
    <property type="entry name" value="Arginosuc_synth_CS"/>
</dbReference>
<dbReference type="InterPro" id="IPR023434">
    <property type="entry name" value="Arginosuc_synth_type_1_subfam"/>
</dbReference>
<dbReference type="InterPro" id="IPR024074">
    <property type="entry name" value="AS_cat/multimer_dom_body"/>
</dbReference>
<dbReference type="InterPro" id="IPR014729">
    <property type="entry name" value="Rossmann-like_a/b/a_fold"/>
</dbReference>
<dbReference type="NCBIfam" id="TIGR00032">
    <property type="entry name" value="argG"/>
    <property type="match status" value="1"/>
</dbReference>
<dbReference type="NCBIfam" id="NF001770">
    <property type="entry name" value="PRK00509.1"/>
    <property type="match status" value="1"/>
</dbReference>
<dbReference type="NCBIfam" id="NF010392">
    <property type="entry name" value="PRK13820.1"/>
    <property type="match status" value="1"/>
</dbReference>
<dbReference type="PANTHER" id="PTHR11587">
    <property type="entry name" value="ARGININOSUCCINATE SYNTHASE"/>
    <property type="match status" value="1"/>
</dbReference>
<dbReference type="PANTHER" id="PTHR11587:SF2">
    <property type="entry name" value="ARGININOSUCCINATE SYNTHASE"/>
    <property type="match status" value="1"/>
</dbReference>
<dbReference type="Pfam" id="PF20979">
    <property type="entry name" value="Arginosuc_syn_C"/>
    <property type="match status" value="1"/>
</dbReference>
<dbReference type="Pfam" id="PF00764">
    <property type="entry name" value="Arginosuc_synth"/>
    <property type="match status" value="1"/>
</dbReference>
<dbReference type="SUPFAM" id="SSF52402">
    <property type="entry name" value="Adenine nucleotide alpha hydrolases-like"/>
    <property type="match status" value="1"/>
</dbReference>
<dbReference type="SUPFAM" id="SSF69864">
    <property type="entry name" value="Argininosuccinate synthetase, C-terminal domain"/>
    <property type="match status" value="1"/>
</dbReference>
<dbReference type="PROSITE" id="PS00564">
    <property type="entry name" value="ARGININOSUCCIN_SYN_1"/>
    <property type="match status" value="1"/>
</dbReference>
<dbReference type="PROSITE" id="PS00565">
    <property type="entry name" value="ARGININOSUCCIN_SYN_2"/>
    <property type="match status" value="1"/>
</dbReference>
<evidence type="ECO:0000255" key="1">
    <source>
        <dbReference type="HAMAP-Rule" id="MF_00005"/>
    </source>
</evidence>
<proteinExistence type="inferred from homology"/>
<organism>
    <name type="scientific">Methanocaldococcus jannaschii (strain ATCC 43067 / DSM 2661 / JAL-1 / JCM 10045 / NBRC 100440)</name>
    <name type="common">Methanococcus jannaschii</name>
    <dbReference type="NCBI Taxonomy" id="243232"/>
    <lineage>
        <taxon>Archaea</taxon>
        <taxon>Methanobacteriati</taxon>
        <taxon>Methanobacteriota</taxon>
        <taxon>Methanomada group</taxon>
        <taxon>Methanococci</taxon>
        <taxon>Methanococcales</taxon>
        <taxon>Methanocaldococcaceae</taxon>
        <taxon>Methanocaldococcus</taxon>
    </lineage>
</organism>
<accession>Q60174</accession>
<protein>
    <recommendedName>
        <fullName evidence="1">Argininosuccinate synthase</fullName>
        <ecNumber evidence="1">6.3.4.5</ecNumber>
    </recommendedName>
    <alternativeName>
        <fullName evidence="1">Citrulline--aspartate ligase</fullName>
    </alternativeName>
</protein>